<organism>
    <name type="scientific">Mycoplasma capricolum subsp. capricolum (strain California kid / ATCC 27343 / NCTC 10154)</name>
    <dbReference type="NCBI Taxonomy" id="340047"/>
    <lineage>
        <taxon>Bacteria</taxon>
        <taxon>Bacillati</taxon>
        <taxon>Mycoplasmatota</taxon>
        <taxon>Mollicutes</taxon>
        <taxon>Mycoplasmataceae</taxon>
        <taxon>Mycoplasma</taxon>
    </lineage>
</organism>
<proteinExistence type="inferred from homology"/>
<keyword id="KW-0175">Coiled coil</keyword>
<keyword id="KW-0238">DNA-binding</keyword>
<keyword id="KW-0804">Transcription</keyword>
<keyword id="KW-0805">Transcription regulation</keyword>
<reference key="1">
    <citation type="submission" date="2005-09" db="EMBL/GenBank/DDBJ databases">
        <authorList>
            <person name="Glass J.I."/>
            <person name="Lartigue C."/>
            <person name="Pfannkoch C."/>
            <person name="Baden-Tillson H."/>
            <person name="Smith H.O."/>
            <person name="Venter J.C."/>
            <person name="Roske K."/>
            <person name="Wise K.S."/>
            <person name="Calcutt M.J."/>
            <person name="Nelson W.C."/>
            <person name="Nierman W.C."/>
        </authorList>
    </citation>
    <scope>NUCLEOTIDE SEQUENCE [LARGE SCALE GENOMIC DNA]</scope>
    <source>
        <strain>California kid / ATCC 27343 / NCTC 10154</strain>
    </source>
</reference>
<sequence>MSKEIILTQEGLEELKAELKNLLEVTRPKVIEELVEARNQGDLSENADYDAARNRQAEVEARIKEVETLINRAKVIDNSKTHSTGEVKIGSTVEFLSSLDHKTKEIKIVGAIEADPFSRLISNESPIAKAILGKKIGDTVEIKDILKPYKITIKSIK</sequence>
<evidence type="ECO:0000255" key="1">
    <source>
        <dbReference type="HAMAP-Rule" id="MF_00105"/>
    </source>
</evidence>
<protein>
    <recommendedName>
        <fullName evidence="1">Transcription elongation factor GreA</fullName>
    </recommendedName>
    <alternativeName>
        <fullName evidence="1">Transcript cleavage factor GreA</fullName>
    </alternativeName>
</protein>
<gene>
    <name evidence="1" type="primary">greA</name>
    <name type="ordered locus">MCAP_0251</name>
</gene>
<name>GREA_MYCCT</name>
<dbReference type="EMBL" id="CP000123">
    <property type="protein sequence ID" value="ABC01743.1"/>
    <property type="molecule type" value="Genomic_DNA"/>
</dbReference>
<dbReference type="RefSeq" id="WP_011387139.1">
    <property type="nucleotide sequence ID" value="NC_007633.1"/>
</dbReference>
<dbReference type="SMR" id="Q2SSM5"/>
<dbReference type="GeneID" id="23778795"/>
<dbReference type="KEGG" id="mcp:MCAP_0251"/>
<dbReference type="HOGENOM" id="CLU_101379_2_1_14"/>
<dbReference type="PhylomeDB" id="Q2SSM5"/>
<dbReference type="Proteomes" id="UP000001928">
    <property type="component" value="Chromosome"/>
</dbReference>
<dbReference type="GO" id="GO:0003677">
    <property type="term" value="F:DNA binding"/>
    <property type="evidence" value="ECO:0007669"/>
    <property type="project" value="UniProtKB-UniRule"/>
</dbReference>
<dbReference type="GO" id="GO:0070063">
    <property type="term" value="F:RNA polymerase binding"/>
    <property type="evidence" value="ECO:0007669"/>
    <property type="project" value="InterPro"/>
</dbReference>
<dbReference type="GO" id="GO:0006354">
    <property type="term" value="P:DNA-templated transcription elongation"/>
    <property type="evidence" value="ECO:0007669"/>
    <property type="project" value="TreeGrafter"/>
</dbReference>
<dbReference type="GO" id="GO:0032784">
    <property type="term" value="P:regulation of DNA-templated transcription elongation"/>
    <property type="evidence" value="ECO:0007669"/>
    <property type="project" value="UniProtKB-UniRule"/>
</dbReference>
<dbReference type="FunFam" id="1.10.287.180:FF:000001">
    <property type="entry name" value="Transcription elongation factor GreA"/>
    <property type="match status" value="1"/>
</dbReference>
<dbReference type="Gene3D" id="3.10.50.30">
    <property type="entry name" value="Transcription elongation factor, GreA/GreB, C-terminal domain"/>
    <property type="match status" value="1"/>
</dbReference>
<dbReference type="Gene3D" id="1.10.287.180">
    <property type="entry name" value="Transcription elongation factor, GreA/GreB, N-terminal domain"/>
    <property type="match status" value="1"/>
</dbReference>
<dbReference type="HAMAP" id="MF_00105">
    <property type="entry name" value="GreA_GreB"/>
    <property type="match status" value="1"/>
</dbReference>
<dbReference type="InterPro" id="IPR036953">
    <property type="entry name" value="GreA/GreB_C_sf"/>
</dbReference>
<dbReference type="InterPro" id="IPR018151">
    <property type="entry name" value="TF_GreA/GreB_CS"/>
</dbReference>
<dbReference type="InterPro" id="IPR006359">
    <property type="entry name" value="Tscrpt_elong_fac_GreA"/>
</dbReference>
<dbReference type="InterPro" id="IPR028624">
    <property type="entry name" value="Tscrpt_elong_fac_GreA/B"/>
</dbReference>
<dbReference type="InterPro" id="IPR001437">
    <property type="entry name" value="Tscrpt_elong_fac_GreA/B_C"/>
</dbReference>
<dbReference type="InterPro" id="IPR023459">
    <property type="entry name" value="Tscrpt_elong_fac_GreA/B_fam"/>
</dbReference>
<dbReference type="InterPro" id="IPR022691">
    <property type="entry name" value="Tscrpt_elong_fac_GreA/B_N"/>
</dbReference>
<dbReference type="InterPro" id="IPR036805">
    <property type="entry name" value="Tscrpt_elong_fac_GreA/B_N_sf"/>
</dbReference>
<dbReference type="NCBIfam" id="TIGR01462">
    <property type="entry name" value="greA"/>
    <property type="match status" value="1"/>
</dbReference>
<dbReference type="NCBIfam" id="NF001263">
    <property type="entry name" value="PRK00226.1-4"/>
    <property type="match status" value="1"/>
</dbReference>
<dbReference type="PANTHER" id="PTHR30437">
    <property type="entry name" value="TRANSCRIPTION ELONGATION FACTOR GREA"/>
    <property type="match status" value="1"/>
</dbReference>
<dbReference type="PANTHER" id="PTHR30437:SF4">
    <property type="entry name" value="TRANSCRIPTION ELONGATION FACTOR GREA"/>
    <property type="match status" value="1"/>
</dbReference>
<dbReference type="Pfam" id="PF01272">
    <property type="entry name" value="GreA_GreB"/>
    <property type="match status" value="1"/>
</dbReference>
<dbReference type="Pfam" id="PF03449">
    <property type="entry name" value="GreA_GreB_N"/>
    <property type="match status" value="1"/>
</dbReference>
<dbReference type="PIRSF" id="PIRSF006092">
    <property type="entry name" value="GreA_GreB"/>
    <property type="match status" value="1"/>
</dbReference>
<dbReference type="SUPFAM" id="SSF54534">
    <property type="entry name" value="FKBP-like"/>
    <property type="match status" value="1"/>
</dbReference>
<dbReference type="SUPFAM" id="SSF46557">
    <property type="entry name" value="GreA transcript cleavage protein, N-terminal domain"/>
    <property type="match status" value="1"/>
</dbReference>
<dbReference type="PROSITE" id="PS00829">
    <property type="entry name" value="GREAB_1"/>
    <property type="match status" value="1"/>
</dbReference>
<dbReference type="PROSITE" id="PS00830">
    <property type="entry name" value="GREAB_2"/>
    <property type="match status" value="1"/>
</dbReference>
<comment type="function">
    <text evidence="1">Necessary for efficient RNA polymerase transcription elongation past template-encoded arresting sites. The arresting sites in DNA have the property of trapping a certain fraction of elongating RNA polymerases that pass through, resulting in locked ternary complexes. Cleavage of the nascent transcript by cleavage factors such as GreA or GreB allows the resumption of elongation from the new 3'terminus. GreA releases sequences of 2 to 3 nucleotides.</text>
</comment>
<comment type="similarity">
    <text evidence="1">Belongs to the GreA/GreB family.</text>
</comment>
<accession>Q2SSM5</accession>
<feature type="chain" id="PRO_1000034279" description="Transcription elongation factor GreA">
    <location>
        <begin position="1"/>
        <end position="157"/>
    </location>
</feature>
<feature type="coiled-coil region" evidence="1">
    <location>
        <begin position="1"/>
        <end position="75"/>
    </location>
</feature>